<name>RSMH_ACET2</name>
<proteinExistence type="inferred from homology"/>
<dbReference type="EC" id="2.1.1.199" evidence="1"/>
<dbReference type="EMBL" id="CP000568">
    <property type="protein sequence ID" value="ABN52213.1"/>
    <property type="molecule type" value="Genomic_DNA"/>
</dbReference>
<dbReference type="RefSeq" id="WP_011837940.1">
    <property type="nucleotide sequence ID" value="NC_009012.1"/>
</dbReference>
<dbReference type="SMR" id="A3DE34"/>
<dbReference type="STRING" id="203119.Cthe_0981"/>
<dbReference type="GeneID" id="35805846"/>
<dbReference type="KEGG" id="cth:Cthe_0981"/>
<dbReference type="eggNOG" id="COG0275">
    <property type="taxonomic scope" value="Bacteria"/>
</dbReference>
<dbReference type="HOGENOM" id="CLU_038422_2_0_9"/>
<dbReference type="OrthoDB" id="9806637at2"/>
<dbReference type="Proteomes" id="UP000002145">
    <property type="component" value="Chromosome"/>
</dbReference>
<dbReference type="GO" id="GO:0005737">
    <property type="term" value="C:cytoplasm"/>
    <property type="evidence" value="ECO:0007669"/>
    <property type="project" value="UniProtKB-SubCell"/>
</dbReference>
<dbReference type="GO" id="GO:0071424">
    <property type="term" value="F:rRNA (cytosine-N4-)-methyltransferase activity"/>
    <property type="evidence" value="ECO:0007669"/>
    <property type="project" value="UniProtKB-UniRule"/>
</dbReference>
<dbReference type="GO" id="GO:0070475">
    <property type="term" value="P:rRNA base methylation"/>
    <property type="evidence" value="ECO:0007669"/>
    <property type="project" value="UniProtKB-UniRule"/>
</dbReference>
<dbReference type="FunFam" id="1.10.150.170:FF:000001">
    <property type="entry name" value="Ribosomal RNA small subunit methyltransferase H"/>
    <property type="match status" value="1"/>
</dbReference>
<dbReference type="Gene3D" id="1.10.150.170">
    <property type="entry name" value="Putative methyltransferase TM0872, insert domain"/>
    <property type="match status" value="1"/>
</dbReference>
<dbReference type="Gene3D" id="3.40.50.150">
    <property type="entry name" value="Vaccinia Virus protein VP39"/>
    <property type="match status" value="1"/>
</dbReference>
<dbReference type="HAMAP" id="MF_01007">
    <property type="entry name" value="16SrRNA_methyltr_H"/>
    <property type="match status" value="1"/>
</dbReference>
<dbReference type="InterPro" id="IPR002903">
    <property type="entry name" value="RsmH"/>
</dbReference>
<dbReference type="InterPro" id="IPR023397">
    <property type="entry name" value="SAM-dep_MeTrfase_MraW_recog"/>
</dbReference>
<dbReference type="InterPro" id="IPR029063">
    <property type="entry name" value="SAM-dependent_MTases_sf"/>
</dbReference>
<dbReference type="NCBIfam" id="TIGR00006">
    <property type="entry name" value="16S rRNA (cytosine(1402)-N(4))-methyltransferase RsmH"/>
    <property type="match status" value="1"/>
</dbReference>
<dbReference type="PANTHER" id="PTHR11265:SF0">
    <property type="entry name" value="12S RRNA N4-METHYLCYTIDINE METHYLTRANSFERASE"/>
    <property type="match status" value="1"/>
</dbReference>
<dbReference type="PANTHER" id="PTHR11265">
    <property type="entry name" value="S-ADENOSYL-METHYLTRANSFERASE MRAW"/>
    <property type="match status" value="1"/>
</dbReference>
<dbReference type="Pfam" id="PF01795">
    <property type="entry name" value="Methyltransf_5"/>
    <property type="match status" value="1"/>
</dbReference>
<dbReference type="PIRSF" id="PIRSF004486">
    <property type="entry name" value="MraW"/>
    <property type="match status" value="1"/>
</dbReference>
<dbReference type="SUPFAM" id="SSF81799">
    <property type="entry name" value="Putative methyltransferase TM0872, insert domain"/>
    <property type="match status" value="1"/>
</dbReference>
<dbReference type="SUPFAM" id="SSF53335">
    <property type="entry name" value="S-adenosyl-L-methionine-dependent methyltransferases"/>
    <property type="match status" value="1"/>
</dbReference>
<organism>
    <name type="scientific">Acetivibrio thermocellus (strain ATCC 27405 / DSM 1237 / JCM 9322 / NBRC 103400 / NCIMB 10682 / NRRL B-4536 / VPI 7372)</name>
    <name type="common">Clostridium thermocellum</name>
    <dbReference type="NCBI Taxonomy" id="203119"/>
    <lineage>
        <taxon>Bacteria</taxon>
        <taxon>Bacillati</taxon>
        <taxon>Bacillota</taxon>
        <taxon>Clostridia</taxon>
        <taxon>Eubacteriales</taxon>
        <taxon>Oscillospiraceae</taxon>
        <taxon>Acetivibrio</taxon>
    </lineage>
</organism>
<accession>A3DE34</accession>
<protein>
    <recommendedName>
        <fullName evidence="1">Ribosomal RNA small subunit methyltransferase H</fullName>
        <ecNumber evidence="1">2.1.1.199</ecNumber>
    </recommendedName>
    <alternativeName>
        <fullName evidence="1">16S rRNA m(4)C1402 methyltransferase</fullName>
    </alternativeName>
    <alternativeName>
        <fullName evidence="1">rRNA (cytosine-N(4)-)-methyltransferase RsmH</fullName>
    </alternativeName>
</protein>
<feature type="chain" id="PRO_0000386825" description="Ribosomal RNA small subunit methyltransferase H">
    <location>
        <begin position="1"/>
        <end position="313"/>
    </location>
</feature>
<feature type="binding site" evidence="1">
    <location>
        <begin position="33"/>
        <end position="35"/>
    </location>
    <ligand>
        <name>S-adenosyl-L-methionine</name>
        <dbReference type="ChEBI" id="CHEBI:59789"/>
    </ligand>
</feature>
<feature type="binding site" evidence="1">
    <location>
        <position position="53"/>
    </location>
    <ligand>
        <name>S-adenosyl-L-methionine</name>
        <dbReference type="ChEBI" id="CHEBI:59789"/>
    </ligand>
</feature>
<feature type="binding site" evidence="1">
    <location>
        <position position="82"/>
    </location>
    <ligand>
        <name>S-adenosyl-L-methionine</name>
        <dbReference type="ChEBI" id="CHEBI:59789"/>
    </ligand>
</feature>
<feature type="binding site" evidence="1">
    <location>
        <position position="103"/>
    </location>
    <ligand>
        <name>S-adenosyl-L-methionine</name>
        <dbReference type="ChEBI" id="CHEBI:59789"/>
    </ligand>
</feature>
<feature type="binding site" evidence="1">
    <location>
        <position position="110"/>
    </location>
    <ligand>
        <name>S-adenosyl-L-methionine</name>
        <dbReference type="ChEBI" id="CHEBI:59789"/>
    </ligand>
</feature>
<gene>
    <name evidence="1" type="primary">rsmH</name>
    <name type="synonym">mraW</name>
    <name type="ordered locus">Cthe_0981</name>
</gene>
<keyword id="KW-0963">Cytoplasm</keyword>
<keyword id="KW-0489">Methyltransferase</keyword>
<keyword id="KW-1185">Reference proteome</keyword>
<keyword id="KW-0698">rRNA processing</keyword>
<keyword id="KW-0949">S-adenosyl-L-methionine</keyword>
<keyword id="KW-0808">Transferase</keyword>
<evidence type="ECO:0000255" key="1">
    <source>
        <dbReference type="HAMAP-Rule" id="MF_01007"/>
    </source>
</evidence>
<sequence length="313" mass="35065">MEFQHKPVLLEETISNLAIKPDGVYIDGTVGGAGHSGEILKRLDESGTLIGLDQDEFAIKTSQEKLVQINSKAKIILVNTNFVNIKEVCQKNNIESVDGILLDLGVSSHQLDEASRGFSYNKDAPLDMRMDRRGELTAKKIVNEYGREEIKRIIRDYGEEKWASRIAEFIVEARKKKEIETTGELVDIIKAAIPSSARRGGPHPAKRTFQALRIAVNNELGILAKTIEDGTELLKPGGRFCIITFHSLEDRIVKDEFNKKVNPCICPKQFPVCTCGRKPEGVLVNRKPIVPKEKELEENPRARSAKLRVLEKI</sequence>
<reference key="1">
    <citation type="submission" date="2007-02" db="EMBL/GenBank/DDBJ databases">
        <title>Complete sequence of Clostridium thermocellum ATCC 27405.</title>
        <authorList>
            <consortium name="US DOE Joint Genome Institute"/>
            <person name="Copeland A."/>
            <person name="Lucas S."/>
            <person name="Lapidus A."/>
            <person name="Barry K."/>
            <person name="Detter J.C."/>
            <person name="Glavina del Rio T."/>
            <person name="Hammon N."/>
            <person name="Israni S."/>
            <person name="Dalin E."/>
            <person name="Tice H."/>
            <person name="Pitluck S."/>
            <person name="Chertkov O."/>
            <person name="Brettin T."/>
            <person name="Bruce D."/>
            <person name="Han C."/>
            <person name="Tapia R."/>
            <person name="Gilna P."/>
            <person name="Schmutz J."/>
            <person name="Larimer F."/>
            <person name="Land M."/>
            <person name="Hauser L."/>
            <person name="Kyrpides N."/>
            <person name="Mikhailova N."/>
            <person name="Wu J.H.D."/>
            <person name="Newcomb M."/>
            <person name="Richardson P."/>
        </authorList>
    </citation>
    <scope>NUCLEOTIDE SEQUENCE [LARGE SCALE GENOMIC DNA]</scope>
    <source>
        <strain>ATCC 27405 / DSM 1237 / JCM 9322 / NBRC 103400 / NCIMB 10682 / NRRL B-4536 / VPI 7372</strain>
    </source>
</reference>
<comment type="function">
    <text evidence="1">Specifically methylates the N4 position of cytidine in position 1402 (C1402) of 16S rRNA.</text>
</comment>
<comment type="catalytic activity">
    <reaction evidence="1">
        <text>cytidine(1402) in 16S rRNA + S-adenosyl-L-methionine = N(4)-methylcytidine(1402) in 16S rRNA + S-adenosyl-L-homocysteine + H(+)</text>
        <dbReference type="Rhea" id="RHEA:42928"/>
        <dbReference type="Rhea" id="RHEA-COMP:10286"/>
        <dbReference type="Rhea" id="RHEA-COMP:10287"/>
        <dbReference type="ChEBI" id="CHEBI:15378"/>
        <dbReference type="ChEBI" id="CHEBI:57856"/>
        <dbReference type="ChEBI" id="CHEBI:59789"/>
        <dbReference type="ChEBI" id="CHEBI:74506"/>
        <dbReference type="ChEBI" id="CHEBI:82748"/>
        <dbReference type="EC" id="2.1.1.199"/>
    </reaction>
</comment>
<comment type="subcellular location">
    <subcellularLocation>
        <location evidence="1">Cytoplasm</location>
    </subcellularLocation>
</comment>
<comment type="similarity">
    <text evidence="1">Belongs to the methyltransferase superfamily. RsmH family.</text>
</comment>